<feature type="chain" id="PRO_0000276470" description="Large ribosomal subunit protein bL32c">
    <location>
        <begin position="1"/>
        <end position="54"/>
    </location>
</feature>
<dbReference type="EMBL" id="AP009123">
    <property type="protein sequence ID" value="BAF41295.1"/>
    <property type="molecule type" value="Genomic_DNA"/>
</dbReference>
<dbReference type="RefSeq" id="YP_913234.1">
    <property type="nucleotide sequence ID" value="NC_008641.1"/>
</dbReference>
<dbReference type="SMR" id="A0ZZ83"/>
<dbReference type="GeneID" id="4575241"/>
<dbReference type="GO" id="GO:0009507">
    <property type="term" value="C:chloroplast"/>
    <property type="evidence" value="ECO:0007669"/>
    <property type="project" value="UniProtKB-SubCell"/>
</dbReference>
<dbReference type="GO" id="GO:0015934">
    <property type="term" value="C:large ribosomal subunit"/>
    <property type="evidence" value="ECO:0007669"/>
    <property type="project" value="InterPro"/>
</dbReference>
<dbReference type="GO" id="GO:0003735">
    <property type="term" value="F:structural constituent of ribosome"/>
    <property type="evidence" value="ECO:0007669"/>
    <property type="project" value="InterPro"/>
</dbReference>
<dbReference type="GO" id="GO:0006412">
    <property type="term" value="P:translation"/>
    <property type="evidence" value="ECO:0007669"/>
    <property type="project" value="UniProtKB-UniRule"/>
</dbReference>
<dbReference type="HAMAP" id="MF_00340">
    <property type="entry name" value="Ribosomal_bL32"/>
    <property type="match status" value="1"/>
</dbReference>
<dbReference type="InterPro" id="IPR002677">
    <property type="entry name" value="Ribosomal_bL32"/>
</dbReference>
<dbReference type="InterPro" id="IPR044958">
    <property type="entry name" value="Ribosomal_bL32_plant/cyanobact"/>
</dbReference>
<dbReference type="InterPro" id="IPR011332">
    <property type="entry name" value="Ribosomal_zn-bd"/>
</dbReference>
<dbReference type="PANTHER" id="PTHR36083">
    <property type="entry name" value="50S RIBOSOMAL PROTEIN L32, CHLOROPLASTIC"/>
    <property type="match status" value="1"/>
</dbReference>
<dbReference type="PANTHER" id="PTHR36083:SF1">
    <property type="entry name" value="LARGE RIBOSOMAL SUBUNIT PROTEIN BL32C"/>
    <property type="match status" value="1"/>
</dbReference>
<dbReference type="Pfam" id="PF01783">
    <property type="entry name" value="Ribosomal_L32p"/>
    <property type="match status" value="1"/>
</dbReference>
<dbReference type="SUPFAM" id="SSF57829">
    <property type="entry name" value="Zn-binding ribosomal proteins"/>
    <property type="match status" value="1"/>
</dbReference>
<geneLocation type="chloroplast"/>
<proteinExistence type="inferred from homology"/>
<comment type="subcellular location">
    <subcellularLocation>
        <location>Plastid</location>
        <location>Chloroplast</location>
    </subcellularLocation>
</comment>
<comment type="similarity">
    <text evidence="1">Belongs to the bacterial ribosomal protein bL32 family.</text>
</comment>
<name>RK32_GOSBA</name>
<reference key="1">
    <citation type="journal article" date="2006" name="Genes Genet. Syst.">
        <title>Complete nucleotide sequence of the cotton (Gossypium barbadense L.) chloroplast genome with a comparative analysis of sequences among 9 dicot plants.</title>
        <authorList>
            <person name="Ibrahim R.I.H."/>
            <person name="Azuma J."/>
            <person name="Sakamoto M."/>
        </authorList>
    </citation>
    <scope>NUCLEOTIDE SEQUENCE [LARGE SCALE GENOMIC DNA]</scope>
</reference>
<evidence type="ECO:0000255" key="1">
    <source>
        <dbReference type="HAMAP-Rule" id="MF_00340"/>
    </source>
</evidence>
<evidence type="ECO:0000305" key="2"/>
<gene>
    <name evidence="1" type="primary">rpl32</name>
</gene>
<sequence length="54" mass="6216">MAVPKKRTSTSKKRIRKNVWKKKGYWAALKAFSLAKSLSTGNSKSFFVRQINLE</sequence>
<keyword id="KW-0150">Chloroplast</keyword>
<keyword id="KW-0934">Plastid</keyword>
<keyword id="KW-0687">Ribonucleoprotein</keyword>
<keyword id="KW-0689">Ribosomal protein</keyword>
<accession>A0ZZ83</accession>
<protein>
    <recommendedName>
        <fullName evidence="1">Large ribosomal subunit protein bL32c</fullName>
    </recommendedName>
    <alternativeName>
        <fullName evidence="2">50S ribosomal protein L32, chloroplastic</fullName>
    </alternativeName>
</protein>
<organism>
    <name type="scientific">Gossypium barbadense</name>
    <name type="common">Sea Island cotton</name>
    <name type="synonym">Hibiscus barbadensis</name>
    <dbReference type="NCBI Taxonomy" id="3634"/>
    <lineage>
        <taxon>Eukaryota</taxon>
        <taxon>Viridiplantae</taxon>
        <taxon>Streptophyta</taxon>
        <taxon>Embryophyta</taxon>
        <taxon>Tracheophyta</taxon>
        <taxon>Spermatophyta</taxon>
        <taxon>Magnoliopsida</taxon>
        <taxon>eudicotyledons</taxon>
        <taxon>Gunneridae</taxon>
        <taxon>Pentapetalae</taxon>
        <taxon>rosids</taxon>
        <taxon>malvids</taxon>
        <taxon>Malvales</taxon>
        <taxon>Malvaceae</taxon>
        <taxon>Malvoideae</taxon>
        <taxon>Gossypium</taxon>
    </lineage>
</organism>